<accession>B7ULM0</accession>
<reference key="1">
    <citation type="journal article" date="2009" name="J. Bacteriol.">
        <title>Complete genome sequence and comparative genome analysis of enteropathogenic Escherichia coli O127:H6 strain E2348/69.</title>
        <authorList>
            <person name="Iguchi A."/>
            <person name="Thomson N.R."/>
            <person name="Ogura Y."/>
            <person name="Saunders D."/>
            <person name="Ooka T."/>
            <person name="Henderson I.R."/>
            <person name="Harris D."/>
            <person name="Asadulghani M."/>
            <person name="Kurokawa K."/>
            <person name="Dean P."/>
            <person name="Kenny B."/>
            <person name="Quail M.A."/>
            <person name="Thurston S."/>
            <person name="Dougan G."/>
            <person name="Hayashi T."/>
            <person name="Parkhill J."/>
            <person name="Frankel G."/>
        </authorList>
    </citation>
    <scope>NUCLEOTIDE SEQUENCE [LARGE SCALE GENOMIC DNA]</scope>
    <source>
        <strain>E2348/69 / EPEC</strain>
    </source>
</reference>
<keyword id="KW-0131">Cell cycle</keyword>
<keyword id="KW-0132">Cell division</keyword>
<keyword id="KW-0574">Periplasm</keyword>
<keyword id="KW-1185">Reference proteome</keyword>
<keyword id="KW-0732">Signal</keyword>
<comment type="function">
    <text evidence="1">Part of the Tol-Pal system, which plays a role in outer membrane invagination during cell division and is important for maintaining outer membrane integrity. TolB occupies a key intermediary position in the Tol-Pal system because it communicates directly with both membrane-embedded components, Pal in the outer membrane and TolA in the inner membrane.</text>
</comment>
<comment type="subunit">
    <text evidence="1">The Tol-Pal system is composed of five core proteins: the inner membrane proteins TolA, TolQ and TolR, the periplasmic protein TolB and the outer membrane protein Pal. They form a network linking the inner and outer membranes and the peptidoglycan layer.</text>
</comment>
<comment type="subcellular location">
    <subcellularLocation>
        <location evidence="1">Periplasm</location>
    </subcellularLocation>
</comment>
<comment type="similarity">
    <text evidence="1">Belongs to the TolB family.</text>
</comment>
<organism>
    <name type="scientific">Escherichia coli O127:H6 (strain E2348/69 / EPEC)</name>
    <dbReference type="NCBI Taxonomy" id="574521"/>
    <lineage>
        <taxon>Bacteria</taxon>
        <taxon>Pseudomonadati</taxon>
        <taxon>Pseudomonadota</taxon>
        <taxon>Gammaproteobacteria</taxon>
        <taxon>Enterobacterales</taxon>
        <taxon>Enterobacteriaceae</taxon>
        <taxon>Escherichia</taxon>
    </lineage>
</organism>
<evidence type="ECO:0000255" key="1">
    <source>
        <dbReference type="HAMAP-Rule" id="MF_00671"/>
    </source>
</evidence>
<feature type="signal peptide" evidence="1">
    <location>
        <begin position="1"/>
        <end position="21"/>
    </location>
</feature>
<feature type="chain" id="PRO_1000147661" description="Tol-Pal system protein TolB" evidence="1">
    <location>
        <begin position="22"/>
        <end position="430"/>
    </location>
</feature>
<gene>
    <name evidence="1" type="primary">tolB</name>
    <name type="ordered locus">E2348C_0624</name>
</gene>
<sequence>MKQALRVAFGFLILWASVLHAEVRIVIDSGVDSGRPIGVVPFQWAGPGAAPEDIGGIVAADLRNSGKFNPLDRARLPQQPGSAQEVQPAAWSALGIDAVVVGQVTPNPDGSYNVAYQLVDTGGAPGTVLAQNSYKVNKQWLRYAGHTASDEVFEKLTGIKGAFRTRIAYVVQTNGGQFPYELRVSDYDGYNQFVVHRSPQPLMSPAWSPDGSKLAYVTFESGRSALVIQTLANGAVRQVASFPRHNGAPAFSPDGSKLAFALSKTGSLNLYVMDLASGQIRQVTDGRSNNTEPTWFPDSQNLAFTSDQAGRPQVYKVNINGGAPQRITWEGSQNQDADVSSDGKFMVMVSSNGGQQHIAKQDLATGGVQVLSSTFLDETPSLAPNGTMVIYSSSQGMGSVLNLVSTDGRFKARLPATDGQVKFPAWSPYL</sequence>
<name>TOLB_ECO27</name>
<dbReference type="EMBL" id="FM180568">
    <property type="protein sequence ID" value="CAS08172.1"/>
    <property type="molecule type" value="Genomic_DNA"/>
</dbReference>
<dbReference type="RefSeq" id="WP_001295307.1">
    <property type="nucleotide sequence ID" value="NC_011601.1"/>
</dbReference>
<dbReference type="SMR" id="B7ULM0"/>
<dbReference type="GeneID" id="93776744"/>
<dbReference type="KEGG" id="ecg:E2348C_0624"/>
<dbReference type="HOGENOM" id="CLU_047123_0_0_6"/>
<dbReference type="Proteomes" id="UP000008205">
    <property type="component" value="Chromosome"/>
</dbReference>
<dbReference type="GO" id="GO:0042597">
    <property type="term" value="C:periplasmic space"/>
    <property type="evidence" value="ECO:0007669"/>
    <property type="project" value="UniProtKB-SubCell"/>
</dbReference>
<dbReference type="GO" id="GO:0051301">
    <property type="term" value="P:cell division"/>
    <property type="evidence" value="ECO:0007669"/>
    <property type="project" value="UniProtKB-UniRule"/>
</dbReference>
<dbReference type="GO" id="GO:0017038">
    <property type="term" value="P:protein import"/>
    <property type="evidence" value="ECO:0007669"/>
    <property type="project" value="InterPro"/>
</dbReference>
<dbReference type="FunFam" id="2.120.10.30:FF:000022">
    <property type="entry name" value="Tol-Pal system protein TolB"/>
    <property type="match status" value="1"/>
</dbReference>
<dbReference type="FunFam" id="3.40.50.10070:FF:000001">
    <property type="entry name" value="Tol-Pal system protein TolB"/>
    <property type="match status" value="1"/>
</dbReference>
<dbReference type="Gene3D" id="2.120.10.30">
    <property type="entry name" value="TolB, C-terminal domain"/>
    <property type="match status" value="1"/>
</dbReference>
<dbReference type="Gene3D" id="3.40.50.10070">
    <property type="entry name" value="TolB, N-terminal domain"/>
    <property type="match status" value="1"/>
</dbReference>
<dbReference type="HAMAP" id="MF_00671">
    <property type="entry name" value="TolB"/>
    <property type="match status" value="1"/>
</dbReference>
<dbReference type="InterPro" id="IPR011042">
    <property type="entry name" value="6-blade_b-propeller_TolB-like"/>
</dbReference>
<dbReference type="InterPro" id="IPR011659">
    <property type="entry name" value="PD40"/>
</dbReference>
<dbReference type="InterPro" id="IPR014167">
    <property type="entry name" value="Tol-Pal_TolB"/>
</dbReference>
<dbReference type="InterPro" id="IPR007195">
    <property type="entry name" value="TolB_N"/>
</dbReference>
<dbReference type="NCBIfam" id="TIGR02800">
    <property type="entry name" value="propeller_TolB"/>
    <property type="match status" value="1"/>
</dbReference>
<dbReference type="PANTHER" id="PTHR36842:SF1">
    <property type="entry name" value="PROTEIN TOLB"/>
    <property type="match status" value="1"/>
</dbReference>
<dbReference type="PANTHER" id="PTHR36842">
    <property type="entry name" value="PROTEIN TOLB HOMOLOG"/>
    <property type="match status" value="1"/>
</dbReference>
<dbReference type="Pfam" id="PF07676">
    <property type="entry name" value="PD40"/>
    <property type="match status" value="4"/>
</dbReference>
<dbReference type="Pfam" id="PF04052">
    <property type="entry name" value="TolB_N"/>
    <property type="match status" value="1"/>
</dbReference>
<dbReference type="SUPFAM" id="SSF52964">
    <property type="entry name" value="TolB, N-terminal domain"/>
    <property type="match status" value="1"/>
</dbReference>
<dbReference type="SUPFAM" id="SSF69304">
    <property type="entry name" value="Tricorn protease N-terminal domain"/>
    <property type="match status" value="1"/>
</dbReference>
<protein>
    <recommendedName>
        <fullName evidence="1">Tol-Pal system protein TolB</fullName>
    </recommendedName>
</protein>
<proteinExistence type="inferred from homology"/>